<reference key="1">
    <citation type="journal article" date="2002" name="Nature">
        <title>Sequence and analysis of chromosome 2 of Dictyostelium discoideum.</title>
        <authorList>
            <person name="Gloeckner G."/>
            <person name="Eichinger L."/>
            <person name="Szafranski K."/>
            <person name="Pachebat J.A."/>
            <person name="Bankier A.T."/>
            <person name="Dear P.H."/>
            <person name="Lehmann R."/>
            <person name="Baumgart C."/>
            <person name="Parra G."/>
            <person name="Abril J.F."/>
            <person name="Guigo R."/>
            <person name="Kumpf K."/>
            <person name="Tunggal B."/>
            <person name="Cox E.C."/>
            <person name="Quail M.A."/>
            <person name="Platzer M."/>
            <person name="Rosenthal A."/>
            <person name="Noegel A.A."/>
        </authorList>
    </citation>
    <scope>NUCLEOTIDE SEQUENCE [LARGE SCALE GENOMIC DNA]</scope>
    <source>
        <strain>AX4</strain>
    </source>
</reference>
<reference key="2">
    <citation type="journal article" date="2005" name="Nature">
        <title>The genome of the social amoeba Dictyostelium discoideum.</title>
        <authorList>
            <person name="Eichinger L."/>
            <person name="Pachebat J.A."/>
            <person name="Gloeckner G."/>
            <person name="Rajandream M.A."/>
            <person name="Sucgang R."/>
            <person name="Berriman M."/>
            <person name="Song J."/>
            <person name="Olsen R."/>
            <person name="Szafranski K."/>
            <person name="Xu Q."/>
            <person name="Tunggal B."/>
            <person name="Kummerfeld S."/>
            <person name="Madera M."/>
            <person name="Konfortov B.A."/>
            <person name="Rivero F."/>
            <person name="Bankier A.T."/>
            <person name="Lehmann R."/>
            <person name="Hamlin N."/>
            <person name="Davies R."/>
            <person name="Gaudet P."/>
            <person name="Fey P."/>
            <person name="Pilcher K."/>
            <person name="Chen G."/>
            <person name="Saunders D."/>
            <person name="Sodergren E.J."/>
            <person name="Davis P."/>
            <person name="Kerhornou A."/>
            <person name="Nie X."/>
            <person name="Hall N."/>
            <person name="Anjard C."/>
            <person name="Hemphill L."/>
            <person name="Bason N."/>
            <person name="Farbrother P."/>
            <person name="Desany B."/>
            <person name="Just E."/>
            <person name="Morio T."/>
            <person name="Rost R."/>
            <person name="Churcher C.M."/>
            <person name="Cooper J."/>
            <person name="Haydock S."/>
            <person name="van Driessche N."/>
            <person name="Cronin A."/>
            <person name="Goodhead I."/>
            <person name="Muzny D.M."/>
            <person name="Mourier T."/>
            <person name="Pain A."/>
            <person name="Lu M."/>
            <person name="Harper D."/>
            <person name="Lindsay R."/>
            <person name="Hauser H."/>
            <person name="James K.D."/>
            <person name="Quiles M."/>
            <person name="Madan Babu M."/>
            <person name="Saito T."/>
            <person name="Buchrieser C."/>
            <person name="Wardroper A."/>
            <person name="Felder M."/>
            <person name="Thangavelu M."/>
            <person name="Johnson D."/>
            <person name="Knights A."/>
            <person name="Loulseged H."/>
            <person name="Mungall K.L."/>
            <person name="Oliver K."/>
            <person name="Price C."/>
            <person name="Quail M.A."/>
            <person name="Urushihara H."/>
            <person name="Hernandez J."/>
            <person name="Rabbinowitsch E."/>
            <person name="Steffen D."/>
            <person name="Sanders M."/>
            <person name="Ma J."/>
            <person name="Kohara Y."/>
            <person name="Sharp S."/>
            <person name="Simmonds M.N."/>
            <person name="Spiegler S."/>
            <person name="Tivey A."/>
            <person name="Sugano S."/>
            <person name="White B."/>
            <person name="Walker D."/>
            <person name="Woodward J.R."/>
            <person name="Winckler T."/>
            <person name="Tanaka Y."/>
            <person name="Shaulsky G."/>
            <person name="Schleicher M."/>
            <person name="Weinstock G.M."/>
            <person name="Rosenthal A."/>
            <person name="Cox E.C."/>
            <person name="Chisholm R.L."/>
            <person name="Gibbs R.A."/>
            <person name="Loomis W.F."/>
            <person name="Platzer M."/>
            <person name="Kay R.R."/>
            <person name="Williams J.G."/>
            <person name="Dear P.H."/>
            <person name="Noegel A.A."/>
            <person name="Barrell B.G."/>
            <person name="Kuspa A."/>
        </authorList>
    </citation>
    <scope>NUCLEOTIDE SEQUENCE [LARGE SCALE GENOMIC DNA]</scope>
    <source>
        <strain>AX4</strain>
    </source>
</reference>
<gene>
    <name type="ORF">DDB_G0274269</name>
</gene>
<dbReference type="EC" id="2.3.1.48" evidence="1"/>
<dbReference type="EMBL" id="AAFI02000012">
    <property type="protein sequence ID" value="EAL70027.1"/>
    <property type="molecule type" value="Genomic_DNA"/>
</dbReference>
<dbReference type="RefSeq" id="XP_643973.1">
    <property type="nucleotide sequence ID" value="XM_638881.1"/>
</dbReference>
<dbReference type="SMR" id="Q86J12"/>
<dbReference type="FunCoup" id="Q86J12">
    <property type="interactions" value="575"/>
</dbReference>
<dbReference type="STRING" id="44689.Q86J12"/>
<dbReference type="PaxDb" id="44689-DDB0237834"/>
<dbReference type="EnsemblProtists" id="EAL70027">
    <property type="protein sequence ID" value="EAL70027"/>
    <property type="gene ID" value="DDB_G0274269"/>
</dbReference>
<dbReference type="GeneID" id="8619399"/>
<dbReference type="KEGG" id="ddi:DDB_G0274269"/>
<dbReference type="dictyBase" id="DDB_G0274269"/>
<dbReference type="VEuPathDB" id="AmoebaDB:DDB_G0274269"/>
<dbReference type="eggNOG" id="KOG2696">
    <property type="taxonomic scope" value="Eukaryota"/>
</dbReference>
<dbReference type="HOGENOM" id="CLU_036024_2_1_1"/>
<dbReference type="InParanoid" id="Q86J12"/>
<dbReference type="OMA" id="WTCDAND"/>
<dbReference type="PhylomeDB" id="Q86J12"/>
<dbReference type="Reactome" id="R-DDI-3214847">
    <property type="pathway name" value="HATs acetylate histones"/>
</dbReference>
<dbReference type="PRO" id="PR:Q86J12"/>
<dbReference type="Proteomes" id="UP000002195">
    <property type="component" value="Chromosome 2"/>
</dbReference>
<dbReference type="GO" id="GO:0000781">
    <property type="term" value="C:chromosome, telomeric region"/>
    <property type="evidence" value="ECO:0007669"/>
    <property type="project" value="GOC"/>
</dbReference>
<dbReference type="GO" id="GO:0005634">
    <property type="term" value="C:nucleus"/>
    <property type="evidence" value="ECO:0007669"/>
    <property type="project" value="InterPro"/>
</dbReference>
<dbReference type="GO" id="GO:0010485">
    <property type="term" value="F:histone H4 acetyltransferase activity"/>
    <property type="evidence" value="ECO:0000318"/>
    <property type="project" value="GO_Central"/>
</dbReference>
<dbReference type="GO" id="GO:0031509">
    <property type="term" value="P:subtelomeric heterochromatin formation"/>
    <property type="evidence" value="ECO:0007669"/>
    <property type="project" value="InterPro"/>
</dbReference>
<dbReference type="Gene3D" id="3.40.630.30">
    <property type="match status" value="1"/>
</dbReference>
<dbReference type="Gene3D" id="3.90.360.10">
    <property type="entry name" value="Histone acetyl transferase 1 (HAT1), N-terminal domain"/>
    <property type="match status" value="1"/>
</dbReference>
<dbReference type="InterPro" id="IPR016181">
    <property type="entry name" value="Acyl_CoA_acyltransferase"/>
</dbReference>
<dbReference type="InterPro" id="IPR000182">
    <property type="entry name" value="GNAT_dom"/>
</dbReference>
<dbReference type="InterPro" id="IPR019467">
    <property type="entry name" value="Hat1_N"/>
</dbReference>
<dbReference type="InterPro" id="IPR037113">
    <property type="entry name" value="Hat1_N_sf"/>
</dbReference>
<dbReference type="InterPro" id="IPR017380">
    <property type="entry name" value="Hist_AcTrfase_B-typ_cat-su"/>
</dbReference>
<dbReference type="PANTHER" id="PTHR12046">
    <property type="entry name" value="HISTONE ACETYLTRANSFERASE TYPE B CATALYTIC SUBUNIT"/>
    <property type="match status" value="1"/>
</dbReference>
<dbReference type="Pfam" id="PF00583">
    <property type="entry name" value="Acetyltransf_1"/>
    <property type="match status" value="1"/>
</dbReference>
<dbReference type="Pfam" id="PF10394">
    <property type="entry name" value="Hat1_N"/>
    <property type="match status" value="1"/>
</dbReference>
<dbReference type="PIRSF" id="PIRSF038084">
    <property type="entry name" value="HAT-B_cat"/>
    <property type="match status" value="1"/>
</dbReference>
<dbReference type="SUPFAM" id="SSF55729">
    <property type="entry name" value="Acyl-CoA N-acyltransferases (Nat)"/>
    <property type="match status" value="1"/>
</dbReference>
<name>HAT11_DICDI</name>
<keyword id="KW-0012">Acyltransferase</keyword>
<keyword id="KW-0175">Coiled coil</keyword>
<keyword id="KW-1185">Reference proteome</keyword>
<keyword id="KW-0808">Transferase</keyword>
<evidence type="ECO:0000250" key="1">
    <source>
        <dbReference type="UniProtKB" id="O14929"/>
    </source>
</evidence>
<evidence type="ECO:0000255" key="2"/>
<evidence type="ECO:0000256" key="3">
    <source>
        <dbReference type="SAM" id="MobiDB-lite"/>
    </source>
</evidence>
<evidence type="ECO:0000305" key="4"/>
<organism>
    <name type="scientific">Dictyostelium discoideum</name>
    <name type="common">Social amoeba</name>
    <dbReference type="NCBI Taxonomy" id="44689"/>
    <lineage>
        <taxon>Eukaryota</taxon>
        <taxon>Amoebozoa</taxon>
        <taxon>Evosea</taxon>
        <taxon>Eumycetozoa</taxon>
        <taxon>Dictyostelia</taxon>
        <taxon>Dictyosteliales</taxon>
        <taxon>Dictyosteliaceae</taxon>
        <taxon>Dictyostelium</taxon>
    </lineage>
</organism>
<feature type="chain" id="PRO_0000367831" description="Histone acetyltransferase type B catalytic subunit DDB_G0274269">
    <location>
        <begin position="1"/>
        <end position="486"/>
    </location>
</feature>
<feature type="domain" description="N-acetyltransferase">
    <location>
        <begin position="189"/>
        <end position="386"/>
    </location>
</feature>
<feature type="region of interest" description="Disordered" evidence="3">
    <location>
        <begin position="33"/>
        <end position="78"/>
    </location>
</feature>
<feature type="coiled-coil region" evidence="2">
    <location>
        <begin position="27"/>
        <end position="69"/>
    </location>
</feature>
<feature type="coiled-coil region" evidence="2">
    <location>
        <begin position="392"/>
        <end position="481"/>
    </location>
</feature>
<feature type="compositionally biased region" description="Basic and acidic residues" evidence="3">
    <location>
        <begin position="33"/>
        <end position="50"/>
    </location>
</feature>
<feature type="active site" description="Proton donor/acceptor" evidence="1">
    <location>
        <position position="299"/>
    </location>
</feature>
<feature type="binding site" evidence="1">
    <location>
        <begin position="260"/>
        <end position="262"/>
    </location>
    <ligand>
        <name>acetyl-CoA</name>
        <dbReference type="ChEBI" id="CHEBI:57288"/>
    </ligand>
</feature>
<feature type="binding site" evidence="1">
    <location>
        <begin position="267"/>
        <end position="273"/>
    </location>
    <ligand>
        <name>acetyl-CoA</name>
        <dbReference type="ChEBI" id="CHEBI:57288"/>
    </ligand>
</feature>
<feature type="site" description="Interaction with histone H4 N-terminus" evidence="1">
    <location>
        <position position="218"/>
    </location>
</feature>
<accession>Q86J12</accession>
<accession>Q555T7</accession>
<protein>
    <recommendedName>
        <fullName>Histone acetyltransferase type B catalytic subunit DDB_G0274269</fullName>
        <ecNumber evidence="1">2.3.1.48</ecNumber>
    </recommendedName>
</protein>
<proteinExistence type="inferred from homology"/>
<sequence length="486" mass="57832">MTNRIKSSNTLLTFDANEVTNIKLVWDIEELKNKDNKENKDKENKAHIKDEGEEEEQKEKKEEEEKEDDGGPISFHPTYSHQIFNEDKIQGYEPCKIDIYMGAGSLTSYIDTNYTLQSKNLTNVEGEFLKVFSKQDPPISKQSFYKYIEEKEKLFKPIGKKIHEYSIIDKESGKETEYEIYFGRITDQVVFRYHEKLQIFVLWYIDGSSYIWTDDPNWDIFFIFEKRIIDGEKRYGITGYSTIYNFYHHPEQTRARISQYLILPPYQRMGHGKYLFNSIYQYYKTNDGFYGPIYDITIEDPADEFNLLRNYVDLKNIMDEKLFDNVILDLNANNKSVFEEIRKKLLIPYKQSKLCLEIYLFSKFLGTPNSDTKYKEYRISIKKRLYKQNIGDSEQIEKIKQQVAEENQENLRLEQEELQELQDIENKKNGTNIKVDIKPKELTTPPGPEKNKEEIEKDRLEEILELYKELEKNYHKTLSSLNLISK</sequence>
<comment type="catalytic activity">
    <reaction evidence="1">
        <text>L-lysyl-[protein] + acetyl-CoA = N(6)-acetyl-L-lysyl-[protein] + CoA + H(+)</text>
        <dbReference type="Rhea" id="RHEA:45948"/>
        <dbReference type="Rhea" id="RHEA-COMP:9752"/>
        <dbReference type="Rhea" id="RHEA-COMP:10731"/>
        <dbReference type="ChEBI" id="CHEBI:15378"/>
        <dbReference type="ChEBI" id="CHEBI:29969"/>
        <dbReference type="ChEBI" id="CHEBI:57287"/>
        <dbReference type="ChEBI" id="CHEBI:57288"/>
        <dbReference type="ChEBI" id="CHEBI:61930"/>
        <dbReference type="EC" id="2.3.1.48"/>
    </reaction>
</comment>
<comment type="similarity">
    <text evidence="4">Belongs to the HAT1 family.</text>
</comment>